<comment type="subcellular location">
    <subcellularLocation>
        <location evidence="1">Cell membrane</location>
        <topology evidence="1">Lipid-anchor</topology>
    </subcellularLocation>
</comment>
<comment type="similarity">
    <text evidence="1">Belongs to the UPF0257 family.</text>
</comment>
<sequence>MKKPLLLTLLCMILAGCDNPKSLESFTPEMASFSNEFDFDPLRGPVKDFSQTLMSENGEVAKQVTGTLSQEGCFDTLELHDLENNTGLALVLDANYYRDAQTLEKKVQLQGKCQLAALPSAGVTWETDDNGFVVSATGKEMKVEYRYDSEGYPLGKTTINSQNTLSVTAKPSADPRKKLDYTAVSRVDDRQVGNVTQSCEYDAYANPVDCRLVIVDESVKPAVSHHYTIKNRIDYY</sequence>
<organism>
    <name type="scientific">Salmonella schwarzengrund (strain CVM19633)</name>
    <dbReference type="NCBI Taxonomy" id="439843"/>
    <lineage>
        <taxon>Bacteria</taxon>
        <taxon>Pseudomonadati</taxon>
        <taxon>Pseudomonadota</taxon>
        <taxon>Gammaproteobacteria</taxon>
        <taxon>Enterobacterales</taxon>
        <taxon>Enterobacteriaceae</taxon>
        <taxon>Salmonella</taxon>
    </lineage>
</organism>
<accession>B4TVG8</accession>
<keyword id="KW-1003">Cell membrane</keyword>
<keyword id="KW-0449">Lipoprotein</keyword>
<keyword id="KW-0472">Membrane</keyword>
<keyword id="KW-0564">Palmitate</keyword>
<keyword id="KW-0732">Signal</keyword>
<reference key="1">
    <citation type="journal article" date="2011" name="J. Bacteriol.">
        <title>Comparative genomics of 28 Salmonella enterica isolates: evidence for CRISPR-mediated adaptive sublineage evolution.</title>
        <authorList>
            <person name="Fricke W.F."/>
            <person name="Mammel M.K."/>
            <person name="McDermott P.F."/>
            <person name="Tartera C."/>
            <person name="White D.G."/>
            <person name="Leclerc J.E."/>
            <person name="Ravel J."/>
            <person name="Cebula T.A."/>
        </authorList>
    </citation>
    <scope>NUCLEOTIDE SEQUENCE [LARGE SCALE GENOMIC DNA]</scope>
    <source>
        <strain>CVM19633</strain>
    </source>
</reference>
<evidence type="ECO:0000255" key="1">
    <source>
        <dbReference type="HAMAP-Rule" id="MF_01065"/>
    </source>
</evidence>
<protein>
    <recommendedName>
        <fullName evidence="1">UPF0257 lipoprotein YnfC</fullName>
    </recommendedName>
</protein>
<name>YNFC_SALSV</name>
<feature type="signal peptide" evidence="1">
    <location>
        <begin position="1"/>
        <end position="16"/>
    </location>
</feature>
<feature type="chain" id="PRO_1000136561" description="UPF0257 lipoprotein YnfC">
    <location>
        <begin position="17"/>
        <end position="236"/>
    </location>
</feature>
<feature type="lipid moiety-binding region" description="N-palmitoyl cysteine" evidence="1">
    <location>
        <position position="17"/>
    </location>
</feature>
<feature type="lipid moiety-binding region" description="S-diacylglycerol cysteine" evidence="1">
    <location>
        <position position="17"/>
    </location>
</feature>
<gene>
    <name evidence="1" type="primary">ynfC</name>
    <name type="ordered locus">SeSA_A1603</name>
</gene>
<proteinExistence type="inferred from homology"/>
<dbReference type="EMBL" id="CP001127">
    <property type="protein sequence ID" value="ACF89639.1"/>
    <property type="molecule type" value="Genomic_DNA"/>
</dbReference>
<dbReference type="RefSeq" id="WP_000743122.1">
    <property type="nucleotide sequence ID" value="NC_011094.1"/>
</dbReference>
<dbReference type="SMR" id="B4TVG8"/>
<dbReference type="KEGG" id="sew:SeSA_A1603"/>
<dbReference type="HOGENOM" id="CLU_1174761_0_0_6"/>
<dbReference type="Proteomes" id="UP000001865">
    <property type="component" value="Chromosome"/>
</dbReference>
<dbReference type="GO" id="GO:0005886">
    <property type="term" value="C:plasma membrane"/>
    <property type="evidence" value="ECO:0007669"/>
    <property type="project" value="UniProtKB-SubCell"/>
</dbReference>
<dbReference type="HAMAP" id="MF_01065">
    <property type="entry name" value="UPF0257"/>
    <property type="match status" value="1"/>
</dbReference>
<dbReference type="InterPro" id="IPR010646">
    <property type="entry name" value="UPF0257"/>
</dbReference>
<dbReference type="NCBIfam" id="NF002798">
    <property type="entry name" value="PRK02939.1"/>
    <property type="match status" value="1"/>
</dbReference>
<dbReference type="Pfam" id="PF06788">
    <property type="entry name" value="UPF0257"/>
    <property type="match status" value="1"/>
</dbReference>
<dbReference type="PROSITE" id="PS51257">
    <property type="entry name" value="PROKAR_LIPOPROTEIN"/>
    <property type="match status" value="1"/>
</dbReference>